<evidence type="ECO:0000255" key="1">
    <source>
        <dbReference type="HAMAP-Rule" id="MF_00210"/>
    </source>
</evidence>
<organism>
    <name type="scientific">Actinobacillus pleuropneumoniae serotype 5b (strain L20)</name>
    <dbReference type="NCBI Taxonomy" id="416269"/>
    <lineage>
        <taxon>Bacteria</taxon>
        <taxon>Pseudomonadati</taxon>
        <taxon>Pseudomonadota</taxon>
        <taxon>Gammaproteobacteria</taxon>
        <taxon>Pasteurellales</taxon>
        <taxon>Pasteurellaceae</taxon>
        <taxon>Actinobacillus</taxon>
    </lineage>
</organism>
<protein>
    <recommendedName>
        <fullName evidence="1">3-phosphoshikimate 1-carboxyvinyltransferase</fullName>
        <ecNumber evidence="1">2.5.1.19</ecNumber>
    </recommendedName>
    <alternativeName>
        <fullName evidence="1">5-enolpyruvylshikimate-3-phosphate synthase</fullName>
        <shortName evidence="1">EPSP synthase</shortName>
        <shortName evidence="1">EPSPS</shortName>
    </alternativeName>
</protein>
<dbReference type="EC" id="2.5.1.19" evidence="1"/>
<dbReference type="EMBL" id="CP000569">
    <property type="protein sequence ID" value="ABN73799.1"/>
    <property type="molecule type" value="Genomic_DNA"/>
</dbReference>
<dbReference type="RefSeq" id="WP_005597044.1">
    <property type="nucleotide sequence ID" value="NC_009053.1"/>
</dbReference>
<dbReference type="SMR" id="A3N063"/>
<dbReference type="STRING" id="416269.APL_0699"/>
<dbReference type="EnsemblBacteria" id="ABN73799">
    <property type="protein sequence ID" value="ABN73799"/>
    <property type="gene ID" value="APL_0699"/>
</dbReference>
<dbReference type="GeneID" id="48598880"/>
<dbReference type="KEGG" id="apl:APL_0699"/>
<dbReference type="eggNOG" id="COG0128">
    <property type="taxonomic scope" value="Bacteria"/>
</dbReference>
<dbReference type="HOGENOM" id="CLU_024321_0_0_6"/>
<dbReference type="UniPathway" id="UPA00053">
    <property type="reaction ID" value="UER00089"/>
</dbReference>
<dbReference type="Proteomes" id="UP000001432">
    <property type="component" value="Chromosome"/>
</dbReference>
<dbReference type="GO" id="GO:0005737">
    <property type="term" value="C:cytoplasm"/>
    <property type="evidence" value="ECO:0007669"/>
    <property type="project" value="UniProtKB-SubCell"/>
</dbReference>
<dbReference type="GO" id="GO:0003866">
    <property type="term" value="F:3-phosphoshikimate 1-carboxyvinyltransferase activity"/>
    <property type="evidence" value="ECO:0007669"/>
    <property type="project" value="UniProtKB-UniRule"/>
</dbReference>
<dbReference type="GO" id="GO:0008652">
    <property type="term" value="P:amino acid biosynthetic process"/>
    <property type="evidence" value="ECO:0007669"/>
    <property type="project" value="UniProtKB-KW"/>
</dbReference>
<dbReference type="GO" id="GO:0009073">
    <property type="term" value="P:aromatic amino acid family biosynthetic process"/>
    <property type="evidence" value="ECO:0007669"/>
    <property type="project" value="UniProtKB-KW"/>
</dbReference>
<dbReference type="GO" id="GO:0009423">
    <property type="term" value="P:chorismate biosynthetic process"/>
    <property type="evidence" value="ECO:0007669"/>
    <property type="project" value="UniProtKB-UniRule"/>
</dbReference>
<dbReference type="CDD" id="cd01556">
    <property type="entry name" value="EPSP_synthase"/>
    <property type="match status" value="1"/>
</dbReference>
<dbReference type="FunFam" id="3.65.10.10:FF:000003">
    <property type="entry name" value="3-phosphoshikimate 1-carboxyvinyltransferase"/>
    <property type="match status" value="1"/>
</dbReference>
<dbReference type="FunFam" id="3.65.10.10:FF:000004">
    <property type="entry name" value="3-phosphoshikimate 1-carboxyvinyltransferase"/>
    <property type="match status" value="1"/>
</dbReference>
<dbReference type="Gene3D" id="3.65.10.10">
    <property type="entry name" value="Enolpyruvate transferase domain"/>
    <property type="match status" value="2"/>
</dbReference>
<dbReference type="HAMAP" id="MF_00210">
    <property type="entry name" value="EPSP_synth"/>
    <property type="match status" value="1"/>
</dbReference>
<dbReference type="InterPro" id="IPR001986">
    <property type="entry name" value="Enolpyruvate_Tfrase_dom"/>
</dbReference>
<dbReference type="InterPro" id="IPR036968">
    <property type="entry name" value="Enolpyruvate_Tfrase_sf"/>
</dbReference>
<dbReference type="InterPro" id="IPR006264">
    <property type="entry name" value="EPSP_synthase"/>
</dbReference>
<dbReference type="InterPro" id="IPR023193">
    <property type="entry name" value="EPSP_synthase_CS"/>
</dbReference>
<dbReference type="InterPro" id="IPR013792">
    <property type="entry name" value="RNA3'P_cycl/enolpyr_Trfase_a/b"/>
</dbReference>
<dbReference type="NCBIfam" id="TIGR01356">
    <property type="entry name" value="aroA"/>
    <property type="match status" value="1"/>
</dbReference>
<dbReference type="PANTHER" id="PTHR21090">
    <property type="entry name" value="AROM/DEHYDROQUINATE SYNTHASE"/>
    <property type="match status" value="1"/>
</dbReference>
<dbReference type="PANTHER" id="PTHR21090:SF5">
    <property type="entry name" value="PENTAFUNCTIONAL AROM POLYPEPTIDE"/>
    <property type="match status" value="1"/>
</dbReference>
<dbReference type="Pfam" id="PF00275">
    <property type="entry name" value="EPSP_synthase"/>
    <property type="match status" value="1"/>
</dbReference>
<dbReference type="PIRSF" id="PIRSF000505">
    <property type="entry name" value="EPSPS"/>
    <property type="match status" value="1"/>
</dbReference>
<dbReference type="SUPFAM" id="SSF55205">
    <property type="entry name" value="EPT/RTPC-like"/>
    <property type="match status" value="1"/>
</dbReference>
<dbReference type="PROSITE" id="PS00104">
    <property type="entry name" value="EPSP_SYNTHASE_1"/>
    <property type="match status" value="1"/>
</dbReference>
<dbReference type="PROSITE" id="PS00885">
    <property type="entry name" value="EPSP_SYNTHASE_2"/>
    <property type="match status" value="1"/>
</dbReference>
<gene>
    <name evidence="1" type="primary">aroA</name>
    <name type="ordered locus">APL_0699</name>
</gene>
<proteinExistence type="inferred from homology"/>
<reference key="1">
    <citation type="journal article" date="2008" name="J. Bacteriol.">
        <title>The complete genome sequence of Actinobacillus pleuropneumoniae L20 (serotype 5b).</title>
        <authorList>
            <person name="Foote S.J."/>
            <person name="Bosse J.T."/>
            <person name="Bouevitch A.B."/>
            <person name="Langford P.R."/>
            <person name="Young N.M."/>
            <person name="Nash J.H.E."/>
        </authorList>
    </citation>
    <scope>NUCLEOTIDE SEQUENCE [LARGE SCALE GENOMIC DNA]</scope>
    <source>
        <strain>L20</strain>
    </source>
</reference>
<sequence>MEKITLAPISRVEGEINLPGSKSLSNRALLLAALAKGTTKVTNLLDSDDIRHMLNALKALGVNYSLSEDKTVCTVEGVGGAFNWKNGLALFLGNAGTAMRPLTAALCLKGSSEAEVVLTGEPRMKERPIKHLVDALRQAGASVQYLENEGYPPVAIRNSGLKGGKVQIDGSISSQFLTALLMAAPLAEGDMEIEIIGELVSKPYIDITLAMMKDFGVKVENRNYQTFVVKGNQSYLSPEKYLVEGDASSASYFLAAGAIKGKVKVTGIGKNSIQGDRLFANVLEAMGAKITWGDDFIQAEQGKLKGVDMDMNHIPDAAMTIATAALFAEGETVIRNIYNWRVKETDRLTAMATELRKVGATVEEGEDFIRIQPLPLTQFQHAEIATYNDHRMAMCFSLIALSDTPVTILDPKCTAKTFPTYFTEFEKLSERT</sequence>
<accession>A3N063</accession>
<comment type="function">
    <text evidence="1">Catalyzes the transfer of the enolpyruvyl moiety of phosphoenolpyruvate (PEP) to the 5-hydroxyl of shikimate-3-phosphate (S3P) to produce enolpyruvyl shikimate-3-phosphate and inorganic phosphate.</text>
</comment>
<comment type="catalytic activity">
    <reaction evidence="1">
        <text>3-phosphoshikimate + phosphoenolpyruvate = 5-O-(1-carboxyvinyl)-3-phosphoshikimate + phosphate</text>
        <dbReference type="Rhea" id="RHEA:21256"/>
        <dbReference type="ChEBI" id="CHEBI:43474"/>
        <dbReference type="ChEBI" id="CHEBI:57701"/>
        <dbReference type="ChEBI" id="CHEBI:58702"/>
        <dbReference type="ChEBI" id="CHEBI:145989"/>
        <dbReference type="EC" id="2.5.1.19"/>
    </reaction>
    <physiologicalReaction direction="left-to-right" evidence="1">
        <dbReference type="Rhea" id="RHEA:21257"/>
    </physiologicalReaction>
</comment>
<comment type="pathway">
    <text evidence="1">Metabolic intermediate biosynthesis; chorismate biosynthesis; chorismate from D-erythrose 4-phosphate and phosphoenolpyruvate: step 6/7.</text>
</comment>
<comment type="subunit">
    <text evidence="1">Monomer.</text>
</comment>
<comment type="subcellular location">
    <subcellularLocation>
        <location evidence="1">Cytoplasm</location>
    </subcellularLocation>
</comment>
<comment type="similarity">
    <text evidence="1">Belongs to the EPSP synthase family.</text>
</comment>
<keyword id="KW-0028">Amino-acid biosynthesis</keyword>
<keyword id="KW-0057">Aromatic amino acid biosynthesis</keyword>
<keyword id="KW-0963">Cytoplasm</keyword>
<keyword id="KW-1185">Reference proteome</keyword>
<keyword id="KW-0808">Transferase</keyword>
<feature type="chain" id="PRO_1000012405" description="3-phosphoshikimate 1-carboxyvinyltransferase">
    <location>
        <begin position="1"/>
        <end position="432"/>
    </location>
</feature>
<feature type="active site" description="Proton acceptor" evidence="1">
    <location>
        <position position="316"/>
    </location>
</feature>
<feature type="binding site" evidence="1">
    <location>
        <position position="22"/>
    </location>
    <ligand>
        <name>3-phosphoshikimate</name>
        <dbReference type="ChEBI" id="CHEBI:145989"/>
    </ligand>
</feature>
<feature type="binding site" evidence="1">
    <location>
        <position position="22"/>
    </location>
    <ligand>
        <name>phosphoenolpyruvate</name>
        <dbReference type="ChEBI" id="CHEBI:58702"/>
    </ligand>
</feature>
<feature type="binding site" evidence="1">
    <location>
        <position position="23"/>
    </location>
    <ligand>
        <name>3-phosphoshikimate</name>
        <dbReference type="ChEBI" id="CHEBI:145989"/>
    </ligand>
</feature>
<feature type="binding site" evidence="1">
    <location>
        <position position="27"/>
    </location>
    <ligand>
        <name>3-phosphoshikimate</name>
        <dbReference type="ChEBI" id="CHEBI:145989"/>
    </ligand>
</feature>
<feature type="binding site" evidence="1">
    <location>
        <position position="96"/>
    </location>
    <ligand>
        <name>phosphoenolpyruvate</name>
        <dbReference type="ChEBI" id="CHEBI:58702"/>
    </ligand>
</feature>
<feature type="binding site" evidence="1">
    <location>
        <position position="127"/>
    </location>
    <ligand>
        <name>phosphoenolpyruvate</name>
        <dbReference type="ChEBI" id="CHEBI:58702"/>
    </ligand>
</feature>
<feature type="binding site" evidence="1">
    <location>
        <position position="173"/>
    </location>
    <ligand>
        <name>3-phosphoshikimate</name>
        <dbReference type="ChEBI" id="CHEBI:145989"/>
    </ligand>
</feature>
<feature type="binding site" evidence="1">
    <location>
        <position position="174"/>
    </location>
    <ligand>
        <name>3-phosphoshikimate</name>
        <dbReference type="ChEBI" id="CHEBI:145989"/>
    </ligand>
</feature>
<feature type="binding site" evidence="1">
    <location>
        <position position="175"/>
    </location>
    <ligand>
        <name>3-phosphoshikimate</name>
        <dbReference type="ChEBI" id="CHEBI:145989"/>
    </ligand>
</feature>
<feature type="binding site" evidence="1">
    <location>
        <position position="175"/>
    </location>
    <ligand>
        <name>phosphoenolpyruvate</name>
        <dbReference type="ChEBI" id="CHEBI:58702"/>
    </ligand>
</feature>
<feature type="binding site" evidence="1">
    <location>
        <position position="201"/>
    </location>
    <ligand>
        <name>3-phosphoshikimate</name>
        <dbReference type="ChEBI" id="CHEBI:145989"/>
    </ligand>
</feature>
<feature type="binding site" evidence="1">
    <location>
        <position position="316"/>
    </location>
    <ligand>
        <name>3-phosphoshikimate</name>
        <dbReference type="ChEBI" id="CHEBI:145989"/>
    </ligand>
</feature>
<feature type="binding site" evidence="1">
    <location>
        <position position="339"/>
    </location>
    <ligand>
        <name>3-phosphoshikimate</name>
        <dbReference type="ChEBI" id="CHEBI:145989"/>
    </ligand>
</feature>
<feature type="binding site" evidence="1">
    <location>
        <position position="343"/>
    </location>
    <ligand>
        <name>3-phosphoshikimate</name>
        <dbReference type="ChEBI" id="CHEBI:145989"/>
    </ligand>
</feature>
<feature type="binding site" evidence="1">
    <location>
        <position position="347"/>
    </location>
    <ligand>
        <name>phosphoenolpyruvate</name>
        <dbReference type="ChEBI" id="CHEBI:58702"/>
    </ligand>
</feature>
<feature type="binding site" evidence="1">
    <location>
        <position position="391"/>
    </location>
    <ligand>
        <name>phosphoenolpyruvate</name>
        <dbReference type="ChEBI" id="CHEBI:58702"/>
    </ligand>
</feature>
<feature type="binding site" evidence="1">
    <location>
        <position position="416"/>
    </location>
    <ligand>
        <name>phosphoenolpyruvate</name>
        <dbReference type="ChEBI" id="CHEBI:58702"/>
    </ligand>
</feature>
<name>AROA_ACTP2</name>